<protein>
    <recommendedName>
        <fullName evidence="1">NADH-quinone oxidoreductase subunit D</fullName>
        <ecNumber evidence="1">7.1.1.-</ecNumber>
    </recommendedName>
    <alternativeName>
        <fullName evidence="1">NADH dehydrogenase I subunit D</fullName>
    </alternativeName>
    <alternativeName>
        <fullName evidence="1">NDH-1 subunit D</fullName>
    </alternativeName>
</protein>
<keyword id="KW-0997">Cell inner membrane</keyword>
<keyword id="KW-1003">Cell membrane</keyword>
<keyword id="KW-0472">Membrane</keyword>
<keyword id="KW-0520">NAD</keyword>
<keyword id="KW-0874">Quinone</keyword>
<keyword id="KW-1185">Reference proteome</keyword>
<keyword id="KW-1278">Translocase</keyword>
<keyword id="KW-0813">Transport</keyword>
<keyword id="KW-0830">Ubiquinone</keyword>
<accession>B6JGW3</accession>
<accession>F8BWN4</accession>
<feature type="chain" id="PRO_0000371898" description="NADH-quinone oxidoreductase subunit D">
    <location>
        <begin position="1"/>
        <end position="405"/>
    </location>
</feature>
<reference key="1">
    <citation type="journal article" date="2008" name="J. Bacteriol.">
        <title>Genome sequence of the chemolithoautotrophic bacterium Oligotropha carboxidovorans OM5T.</title>
        <authorList>
            <person name="Paul D."/>
            <person name="Bridges S."/>
            <person name="Burgess S.C."/>
            <person name="Dandass Y."/>
            <person name="Lawrence M.L."/>
        </authorList>
    </citation>
    <scope>NUCLEOTIDE SEQUENCE [LARGE SCALE GENOMIC DNA]</scope>
    <source>
        <strain>ATCC 49405 / DSM 1227 / KCTC 32145 / OM5</strain>
    </source>
</reference>
<reference key="2">
    <citation type="journal article" date="2011" name="J. Bacteriol.">
        <title>Complete genome sequences of the chemolithoautotrophic Oligotropha carboxidovorans strains OM4 and OM5.</title>
        <authorList>
            <person name="Volland S."/>
            <person name="Rachinger M."/>
            <person name="Strittmatter A."/>
            <person name="Daniel R."/>
            <person name="Gottschalk G."/>
            <person name="Meyer O."/>
        </authorList>
    </citation>
    <scope>NUCLEOTIDE SEQUENCE [LARGE SCALE GENOMIC DNA]</scope>
    <source>
        <strain>ATCC 49405 / DSM 1227 / KCTC 32145 / OM5</strain>
    </source>
</reference>
<organism>
    <name type="scientific">Afipia carboxidovorans (strain ATCC 49405 / DSM 1227 / KCTC 32145 / OM5)</name>
    <name type="common">Oligotropha carboxidovorans</name>
    <dbReference type="NCBI Taxonomy" id="504832"/>
    <lineage>
        <taxon>Bacteria</taxon>
        <taxon>Pseudomonadati</taxon>
        <taxon>Pseudomonadota</taxon>
        <taxon>Alphaproteobacteria</taxon>
        <taxon>Hyphomicrobiales</taxon>
        <taxon>Nitrobacteraceae</taxon>
        <taxon>Afipia</taxon>
    </lineage>
</organism>
<proteinExistence type="inferred from homology"/>
<evidence type="ECO:0000255" key="1">
    <source>
        <dbReference type="HAMAP-Rule" id="MF_01358"/>
    </source>
</evidence>
<gene>
    <name evidence="1" type="primary">nuoD</name>
    <name type="ordered locus">OCAR_5926</name>
    <name type="ordered locus">OCA5_c20950</name>
</gene>
<sequence length="405" mass="45603">MSITEANALADAPGTRNFTINFGPQHPAAHGVLRLVLELDGEVVERVDPHIGLLHRGTEKLIEQKTYLQAIPYFDRLDYVAPMNQEHAFCLAAEKLLGITVPRRGQLIRVLYSEIGRILSHLLNITTQALDVGALTPPLWGFEEREKLMMFYERASGSRMHAAFFRIGGVHQDLPPKLIGDIDIWCDAFPEKLDDLEILLTDNRIFKQRNVDIGVVTLDQAWEWGFSGVMVRGSGAAWDLRRAQPYECYDEMEFDIPIGKNGDCYDRYCIRVEEMRQSVRIMKQCIAKMRAPDGQGPVVIEDNKITPPRRGEMKRSMEALIHHFKLYTEGVHVPPGEVYAAVEAPKGEFGVYLVADGTNKPYKCKIRAPGFAHLQAMDFICKGHLLADVSAILGSLDIVFGEVDR</sequence>
<name>NUOD_AFIC5</name>
<dbReference type="EC" id="7.1.1.-" evidence="1"/>
<dbReference type="EMBL" id="CP001196">
    <property type="protein sequence ID" value="ACI93047.1"/>
    <property type="molecule type" value="Genomic_DNA"/>
</dbReference>
<dbReference type="EMBL" id="CP002826">
    <property type="protein sequence ID" value="AEI06802.1"/>
    <property type="molecule type" value="Genomic_DNA"/>
</dbReference>
<dbReference type="RefSeq" id="WP_012563074.1">
    <property type="nucleotide sequence ID" value="NC_015684.1"/>
</dbReference>
<dbReference type="SMR" id="B6JGW3"/>
<dbReference type="STRING" id="504832.OCA5_c20950"/>
<dbReference type="KEGG" id="oca:OCAR_5926"/>
<dbReference type="KEGG" id="ocg:OCA5_c20950"/>
<dbReference type="PATRIC" id="fig|504832.7.peg.2217"/>
<dbReference type="eggNOG" id="COG0649">
    <property type="taxonomic scope" value="Bacteria"/>
</dbReference>
<dbReference type="HOGENOM" id="CLU_015134_1_1_5"/>
<dbReference type="OrthoDB" id="9801496at2"/>
<dbReference type="Proteomes" id="UP000007730">
    <property type="component" value="Chromosome"/>
</dbReference>
<dbReference type="GO" id="GO:0005886">
    <property type="term" value="C:plasma membrane"/>
    <property type="evidence" value="ECO:0007669"/>
    <property type="project" value="UniProtKB-SubCell"/>
</dbReference>
<dbReference type="GO" id="GO:0051287">
    <property type="term" value="F:NAD binding"/>
    <property type="evidence" value="ECO:0007669"/>
    <property type="project" value="InterPro"/>
</dbReference>
<dbReference type="GO" id="GO:0050136">
    <property type="term" value="F:NADH:ubiquinone reductase (non-electrogenic) activity"/>
    <property type="evidence" value="ECO:0007669"/>
    <property type="project" value="UniProtKB-UniRule"/>
</dbReference>
<dbReference type="GO" id="GO:0048038">
    <property type="term" value="F:quinone binding"/>
    <property type="evidence" value="ECO:0007669"/>
    <property type="project" value="UniProtKB-KW"/>
</dbReference>
<dbReference type="FunFam" id="1.10.645.10:FF:000005">
    <property type="entry name" value="NADH-quinone oxidoreductase subunit D"/>
    <property type="match status" value="1"/>
</dbReference>
<dbReference type="Gene3D" id="1.10.645.10">
    <property type="entry name" value="Cytochrome-c3 Hydrogenase, chain B"/>
    <property type="match status" value="1"/>
</dbReference>
<dbReference type="HAMAP" id="MF_01358">
    <property type="entry name" value="NDH1_NuoD"/>
    <property type="match status" value="1"/>
</dbReference>
<dbReference type="InterPro" id="IPR001135">
    <property type="entry name" value="NADH_Q_OxRdtase_suD"/>
</dbReference>
<dbReference type="InterPro" id="IPR014029">
    <property type="entry name" value="NADH_UbQ_OxRdtase_49kDa_CS"/>
</dbReference>
<dbReference type="InterPro" id="IPR022885">
    <property type="entry name" value="NDH1_su_D/H"/>
</dbReference>
<dbReference type="InterPro" id="IPR029014">
    <property type="entry name" value="NiFe-Hase_large"/>
</dbReference>
<dbReference type="NCBIfam" id="TIGR01962">
    <property type="entry name" value="NuoD"/>
    <property type="match status" value="1"/>
</dbReference>
<dbReference type="NCBIfam" id="NF004739">
    <property type="entry name" value="PRK06075.1"/>
    <property type="match status" value="1"/>
</dbReference>
<dbReference type="PANTHER" id="PTHR11993:SF10">
    <property type="entry name" value="NADH DEHYDROGENASE [UBIQUINONE] IRON-SULFUR PROTEIN 2, MITOCHONDRIAL"/>
    <property type="match status" value="1"/>
</dbReference>
<dbReference type="PANTHER" id="PTHR11993">
    <property type="entry name" value="NADH-UBIQUINONE OXIDOREDUCTASE 49 KDA SUBUNIT"/>
    <property type="match status" value="1"/>
</dbReference>
<dbReference type="Pfam" id="PF00346">
    <property type="entry name" value="Complex1_49kDa"/>
    <property type="match status" value="1"/>
</dbReference>
<dbReference type="SUPFAM" id="SSF56762">
    <property type="entry name" value="HydB/Nqo4-like"/>
    <property type="match status" value="1"/>
</dbReference>
<dbReference type="PROSITE" id="PS00535">
    <property type="entry name" value="COMPLEX1_49K"/>
    <property type="match status" value="1"/>
</dbReference>
<comment type="function">
    <text evidence="1">NDH-1 shuttles electrons from NADH, via FMN and iron-sulfur (Fe-S) centers, to quinones in the respiratory chain. The immediate electron acceptor for the enzyme in this species is believed to be ubiquinone. Couples the redox reaction to proton translocation (for every two electrons transferred, four hydrogen ions are translocated across the cytoplasmic membrane), and thus conserves the redox energy in a proton gradient.</text>
</comment>
<comment type="catalytic activity">
    <reaction evidence="1">
        <text>a quinone + NADH + 5 H(+)(in) = a quinol + NAD(+) + 4 H(+)(out)</text>
        <dbReference type="Rhea" id="RHEA:57888"/>
        <dbReference type="ChEBI" id="CHEBI:15378"/>
        <dbReference type="ChEBI" id="CHEBI:24646"/>
        <dbReference type="ChEBI" id="CHEBI:57540"/>
        <dbReference type="ChEBI" id="CHEBI:57945"/>
        <dbReference type="ChEBI" id="CHEBI:132124"/>
    </reaction>
</comment>
<comment type="subunit">
    <text evidence="1">NDH-1 is composed of 14 different subunits. Subunits NuoB, C, D, E, F, and G constitute the peripheral sector of the complex.</text>
</comment>
<comment type="subcellular location">
    <subcellularLocation>
        <location evidence="1">Cell inner membrane</location>
        <topology evidence="1">Peripheral membrane protein</topology>
        <orientation evidence="1">Cytoplasmic side</orientation>
    </subcellularLocation>
</comment>
<comment type="similarity">
    <text evidence="1">Belongs to the complex I 49 kDa subunit family.</text>
</comment>